<protein>
    <recommendedName>
        <fullName evidence="1">Serine hydroxymethyltransferase</fullName>
        <shortName evidence="1">SHMT</shortName>
        <shortName evidence="1">Serine methylase</shortName>
        <ecNumber evidence="1">2.1.2.1</ecNumber>
    </recommendedName>
</protein>
<gene>
    <name evidence="1" type="primary">glyA</name>
    <name type="ordered locus">SMU_1082</name>
</gene>
<dbReference type="EC" id="2.1.2.1" evidence="1"/>
<dbReference type="EMBL" id="AE014133">
    <property type="protein sequence ID" value="AAN58780.1"/>
    <property type="molecule type" value="Genomic_DNA"/>
</dbReference>
<dbReference type="RefSeq" id="NP_721474.1">
    <property type="nucleotide sequence ID" value="NC_004350.2"/>
</dbReference>
<dbReference type="RefSeq" id="WP_002262258.1">
    <property type="nucleotide sequence ID" value="NC_004350.2"/>
</dbReference>
<dbReference type="SMR" id="Q8DU67"/>
<dbReference type="STRING" id="210007.SMU_1082"/>
<dbReference type="KEGG" id="smu:SMU_1082"/>
<dbReference type="PATRIC" id="fig|210007.7.peg.969"/>
<dbReference type="eggNOG" id="COG0112">
    <property type="taxonomic scope" value="Bacteria"/>
</dbReference>
<dbReference type="HOGENOM" id="CLU_022477_2_1_9"/>
<dbReference type="OrthoDB" id="9803846at2"/>
<dbReference type="PhylomeDB" id="Q8DU67"/>
<dbReference type="UniPathway" id="UPA00193"/>
<dbReference type="UniPathway" id="UPA00288">
    <property type="reaction ID" value="UER01023"/>
</dbReference>
<dbReference type="Proteomes" id="UP000002512">
    <property type="component" value="Chromosome"/>
</dbReference>
<dbReference type="GO" id="GO:0005829">
    <property type="term" value="C:cytosol"/>
    <property type="evidence" value="ECO:0007669"/>
    <property type="project" value="TreeGrafter"/>
</dbReference>
<dbReference type="GO" id="GO:0004372">
    <property type="term" value="F:glycine hydroxymethyltransferase activity"/>
    <property type="evidence" value="ECO:0007669"/>
    <property type="project" value="UniProtKB-UniRule"/>
</dbReference>
<dbReference type="GO" id="GO:0030170">
    <property type="term" value="F:pyridoxal phosphate binding"/>
    <property type="evidence" value="ECO:0007669"/>
    <property type="project" value="UniProtKB-UniRule"/>
</dbReference>
<dbReference type="GO" id="GO:0019264">
    <property type="term" value="P:glycine biosynthetic process from serine"/>
    <property type="evidence" value="ECO:0007669"/>
    <property type="project" value="UniProtKB-UniRule"/>
</dbReference>
<dbReference type="GO" id="GO:0035999">
    <property type="term" value="P:tetrahydrofolate interconversion"/>
    <property type="evidence" value="ECO:0007669"/>
    <property type="project" value="UniProtKB-UniRule"/>
</dbReference>
<dbReference type="CDD" id="cd00378">
    <property type="entry name" value="SHMT"/>
    <property type="match status" value="1"/>
</dbReference>
<dbReference type="FunFam" id="3.40.640.10:FF:000001">
    <property type="entry name" value="Serine hydroxymethyltransferase"/>
    <property type="match status" value="1"/>
</dbReference>
<dbReference type="FunFam" id="3.90.1150.10:FF:000072">
    <property type="entry name" value="Serine hydroxymethyltransferase"/>
    <property type="match status" value="1"/>
</dbReference>
<dbReference type="Gene3D" id="3.90.1150.10">
    <property type="entry name" value="Aspartate Aminotransferase, domain 1"/>
    <property type="match status" value="1"/>
</dbReference>
<dbReference type="Gene3D" id="3.40.640.10">
    <property type="entry name" value="Type I PLP-dependent aspartate aminotransferase-like (Major domain)"/>
    <property type="match status" value="1"/>
</dbReference>
<dbReference type="HAMAP" id="MF_00051">
    <property type="entry name" value="SHMT"/>
    <property type="match status" value="1"/>
</dbReference>
<dbReference type="InterPro" id="IPR015424">
    <property type="entry name" value="PyrdxlP-dep_Trfase"/>
</dbReference>
<dbReference type="InterPro" id="IPR015421">
    <property type="entry name" value="PyrdxlP-dep_Trfase_major"/>
</dbReference>
<dbReference type="InterPro" id="IPR015422">
    <property type="entry name" value="PyrdxlP-dep_Trfase_small"/>
</dbReference>
<dbReference type="InterPro" id="IPR001085">
    <property type="entry name" value="Ser_HO-MeTrfase"/>
</dbReference>
<dbReference type="InterPro" id="IPR049943">
    <property type="entry name" value="Ser_HO-MeTrfase-like"/>
</dbReference>
<dbReference type="InterPro" id="IPR019798">
    <property type="entry name" value="Ser_HO-MeTrfase_PLP_BS"/>
</dbReference>
<dbReference type="InterPro" id="IPR039429">
    <property type="entry name" value="SHMT-like_dom"/>
</dbReference>
<dbReference type="NCBIfam" id="NF000586">
    <property type="entry name" value="PRK00011.1"/>
    <property type="match status" value="1"/>
</dbReference>
<dbReference type="PANTHER" id="PTHR11680">
    <property type="entry name" value="SERINE HYDROXYMETHYLTRANSFERASE"/>
    <property type="match status" value="1"/>
</dbReference>
<dbReference type="PANTHER" id="PTHR11680:SF35">
    <property type="entry name" value="SERINE HYDROXYMETHYLTRANSFERASE 1"/>
    <property type="match status" value="1"/>
</dbReference>
<dbReference type="Pfam" id="PF00464">
    <property type="entry name" value="SHMT"/>
    <property type="match status" value="1"/>
</dbReference>
<dbReference type="PIRSF" id="PIRSF000412">
    <property type="entry name" value="SHMT"/>
    <property type="match status" value="1"/>
</dbReference>
<dbReference type="SUPFAM" id="SSF53383">
    <property type="entry name" value="PLP-dependent transferases"/>
    <property type="match status" value="1"/>
</dbReference>
<dbReference type="PROSITE" id="PS00096">
    <property type="entry name" value="SHMT"/>
    <property type="match status" value="1"/>
</dbReference>
<accession>Q8DU67</accession>
<feature type="chain" id="PRO_0000113673" description="Serine hydroxymethyltransferase">
    <location>
        <begin position="1"/>
        <end position="420"/>
    </location>
</feature>
<feature type="binding site" evidence="1">
    <location>
        <position position="121"/>
    </location>
    <ligand>
        <name>(6S)-5,6,7,8-tetrahydrofolate</name>
        <dbReference type="ChEBI" id="CHEBI:57453"/>
    </ligand>
</feature>
<feature type="binding site" evidence="1">
    <location>
        <begin position="125"/>
        <end position="127"/>
    </location>
    <ligand>
        <name>(6S)-5,6,7,8-tetrahydrofolate</name>
        <dbReference type="ChEBI" id="CHEBI:57453"/>
    </ligand>
</feature>
<feature type="binding site" evidence="1">
    <location>
        <begin position="355"/>
        <end position="357"/>
    </location>
    <ligand>
        <name>(6S)-5,6,7,8-tetrahydrofolate</name>
        <dbReference type="ChEBI" id="CHEBI:57453"/>
    </ligand>
</feature>
<feature type="site" description="Plays an important role in substrate specificity" evidence="1">
    <location>
        <position position="229"/>
    </location>
</feature>
<feature type="modified residue" description="N6-(pyridoxal phosphate)lysine" evidence="1">
    <location>
        <position position="230"/>
    </location>
</feature>
<reference key="1">
    <citation type="journal article" date="2002" name="Proc. Natl. Acad. Sci. U.S.A.">
        <title>Genome sequence of Streptococcus mutans UA159, a cariogenic dental pathogen.</title>
        <authorList>
            <person name="Ajdic D.J."/>
            <person name="McShan W.M."/>
            <person name="McLaughlin R.E."/>
            <person name="Savic G."/>
            <person name="Chang J."/>
            <person name="Carson M.B."/>
            <person name="Primeaux C."/>
            <person name="Tian R."/>
            <person name="Kenton S."/>
            <person name="Jia H.G."/>
            <person name="Lin S.P."/>
            <person name="Qian Y."/>
            <person name="Li S."/>
            <person name="Zhu H."/>
            <person name="Najar F.Z."/>
            <person name="Lai H."/>
            <person name="White J."/>
            <person name="Roe B.A."/>
            <person name="Ferretti J.J."/>
        </authorList>
    </citation>
    <scope>NUCLEOTIDE SEQUENCE [LARGE SCALE GENOMIC DNA]</scope>
    <source>
        <strain>ATCC 700610 / UA159</strain>
    </source>
</reference>
<proteinExistence type="inferred from homology"/>
<organism>
    <name type="scientific">Streptococcus mutans serotype c (strain ATCC 700610 / UA159)</name>
    <dbReference type="NCBI Taxonomy" id="210007"/>
    <lineage>
        <taxon>Bacteria</taxon>
        <taxon>Bacillati</taxon>
        <taxon>Bacillota</taxon>
        <taxon>Bacilli</taxon>
        <taxon>Lactobacillales</taxon>
        <taxon>Streptococcaceae</taxon>
        <taxon>Streptococcus</taxon>
    </lineage>
</organism>
<keyword id="KW-0028">Amino-acid biosynthesis</keyword>
<keyword id="KW-0963">Cytoplasm</keyword>
<keyword id="KW-0554">One-carbon metabolism</keyword>
<keyword id="KW-0663">Pyridoxal phosphate</keyword>
<keyword id="KW-1185">Reference proteome</keyword>
<keyword id="KW-0808">Transferase</keyword>
<sequence length="420" mass="46170">MIFDKDNYEEYDREVWEAIHAEEKRQQNNIELIASENVVSKAVMKAQGSILTNKYAEGYPGRRYYGGTDYVDVVESLAIERAKKLFGAKYANVQPHSGSQANAAAYMALIKPGDTVMGLDLAAGGHLTHGSPVSFSGQTYNFIAYNVDPETEVLNYEQILKQAEEVQPKLIVAGASAYSHIIDFKKFRDIADQVGAKLMVDMAHIAGLVAAGLHPNPLPYAHITTTTTHKTLRGPRGGLVLTNDEDLAKKINSAIFPGLQGGPLEHIVAAKAITFKENLDPAFKVYAQKIIENCQAMVEVFNAHEKFRVVSGASENHLFLVDVTQVVENGKVAQNILDDVHITLNKNSIPFEKLSPFKTSGIRIGTAAVTARGFGPEECRKVAELIVKTLENTENEAVLEEVRQEVKLLTDAFPLYENLV</sequence>
<comment type="function">
    <text evidence="1">Catalyzes the reversible interconversion of serine and glycine with tetrahydrofolate (THF) serving as the one-carbon carrier. This reaction serves as the major source of one-carbon groups required for the biosynthesis of purines, thymidylate, methionine, and other important biomolecules. Also exhibits THF-independent aldolase activity toward beta-hydroxyamino acids, producing glycine and aldehydes, via a retro-aldol mechanism.</text>
</comment>
<comment type="catalytic activity">
    <reaction evidence="1">
        <text>(6R)-5,10-methylene-5,6,7,8-tetrahydrofolate + glycine + H2O = (6S)-5,6,7,8-tetrahydrofolate + L-serine</text>
        <dbReference type="Rhea" id="RHEA:15481"/>
        <dbReference type="ChEBI" id="CHEBI:15377"/>
        <dbReference type="ChEBI" id="CHEBI:15636"/>
        <dbReference type="ChEBI" id="CHEBI:33384"/>
        <dbReference type="ChEBI" id="CHEBI:57305"/>
        <dbReference type="ChEBI" id="CHEBI:57453"/>
        <dbReference type="EC" id="2.1.2.1"/>
    </reaction>
</comment>
<comment type="cofactor">
    <cofactor evidence="1">
        <name>pyridoxal 5'-phosphate</name>
        <dbReference type="ChEBI" id="CHEBI:597326"/>
    </cofactor>
</comment>
<comment type="pathway">
    <text evidence="1">One-carbon metabolism; tetrahydrofolate interconversion.</text>
</comment>
<comment type="pathway">
    <text evidence="1">Amino-acid biosynthesis; glycine biosynthesis; glycine from L-serine: step 1/1.</text>
</comment>
<comment type="subunit">
    <text evidence="1">Homodimer.</text>
</comment>
<comment type="subcellular location">
    <subcellularLocation>
        <location evidence="1">Cytoplasm</location>
    </subcellularLocation>
</comment>
<comment type="similarity">
    <text evidence="1">Belongs to the SHMT family.</text>
</comment>
<name>GLYA_STRMU</name>
<evidence type="ECO:0000255" key="1">
    <source>
        <dbReference type="HAMAP-Rule" id="MF_00051"/>
    </source>
</evidence>